<feature type="chain" id="PRO_0000295437" description="Protein transport protein sec31">
    <location>
        <begin position="1"/>
        <end position="1282"/>
    </location>
</feature>
<feature type="repeat" description="WD 1">
    <location>
        <begin position="7"/>
        <end position="47"/>
    </location>
</feature>
<feature type="repeat" description="WD 2">
    <location>
        <begin position="66"/>
        <end position="109"/>
    </location>
</feature>
<feature type="repeat" description="WD 3">
    <location>
        <begin position="118"/>
        <end position="158"/>
    </location>
</feature>
<feature type="repeat" description="WD 4">
    <location>
        <begin position="164"/>
        <end position="204"/>
    </location>
</feature>
<feature type="repeat" description="WD 5">
    <location>
        <begin position="208"/>
        <end position="251"/>
    </location>
</feature>
<feature type="repeat" description="WD 6">
    <location>
        <begin position="255"/>
        <end position="295"/>
    </location>
</feature>
<feature type="repeat" description="WD 7">
    <location>
        <begin position="298"/>
        <end position="338"/>
    </location>
</feature>
<feature type="repeat" description="WD 8; interaction with sec13" evidence="2">
    <location>
        <begin position="382"/>
        <end position="407"/>
    </location>
</feature>
<feature type="region of interest" description="Disordered" evidence="3">
    <location>
        <begin position="491"/>
        <end position="511"/>
    </location>
</feature>
<feature type="region of interest" description="Disordered" evidence="3">
    <location>
        <begin position="801"/>
        <end position="845"/>
    </location>
</feature>
<feature type="region of interest" description="Disordered" evidence="3">
    <location>
        <begin position="906"/>
        <end position="1176"/>
    </location>
</feature>
<feature type="compositionally biased region" description="Basic and acidic residues" evidence="3">
    <location>
        <begin position="491"/>
        <end position="505"/>
    </location>
</feature>
<feature type="compositionally biased region" description="Polar residues" evidence="3">
    <location>
        <begin position="801"/>
        <end position="815"/>
    </location>
</feature>
<feature type="compositionally biased region" description="Pro residues" evidence="3">
    <location>
        <begin position="921"/>
        <end position="934"/>
    </location>
</feature>
<feature type="compositionally biased region" description="Low complexity" evidence="3">
    <location>
        <begin position="973"/>
        <end position="992"/>
    </location>
</feature>
<feature type="compositionally biased region" description="Pro residues" evidence="3">
    <location>
        <begin position="1006"/>
        <end position="1021"/>
    </location>
</feature>
<feature type="compositionally biased region" description="Pro residues" evidence="3">
    <location>
        <begin position="1030"/>
        <end position="1043"/>
    </location>
</feature>
<feature type="compositionally biased region" description="Pro residues" evidence="3">
    <location>
        <begin position="1071"/>
        <end position="1080"/>
    </location>
</feature>
<feature type="compositionally biased region" description="Low complexity" evidence="3">
    <location>
        <begin position="1084"/>
        <end position="1100"/>
    </location>
</feature>
<feature type="compositionally biased region" description="Pro residues" evidence="3">
    <location>
        <begin position="1101"/>
        <end position="1120"/>
    </location>
</feature>
<feature type="compositionally biased region" description="Pro residues" evidence="3">
    <location>
        <begin position="1129"/>
        <end position="1146"/>
    </location>
</feature>
<feature type="compositionally biased region" description="Low complexity" evidence="3">
    <location>
        <begin position="1152"/>
        <end position="1162"/>
    </location>
</feature>
<name>SEC31_EMENI</name>
<accession>Q5AZM3</accession>
<accession>C8V1I6</accession>
<keyword id="KW-0968">Cytoplasmic vesicle</keyword>
<keyword id="KW-0256">Endoplasmic reticulum</keyword>
<keyword id="KW-0931">ER-Golgi transport</keyword>
<keyword id="KW-0472">Membrane</keyword>
<keyword id="KW-0653">Protein transport</keyword>
<keyword id="KW-1185">Reference proteome</keyword>
<keyword id="KW-0677">Repeat</keyword>
<keyword id="KW-0813">Transport</keyword>
<keyword id="KW-0853">WD repeat</keyword>
<proteinExistence type="inferred from homology"/>
<dbReference type="EMBL" id="AACD01000107">
    <property type="protein sequence ID" value="EAA58641.1"/>
    <property type="status" value="ALT_SEQ"/>
    <property type="molecule type" value="Genomic_DNA"/>
</dbReference>
<dbReference type="EMBL" id="BN001301">
    <property type="protein sequence ID" value="CBF69840.1"/>
    <property type="molecule type" value="Genomic_DNA"/>
</dbReference>
<dbReference type="RefSeq" id="XP_663861.1">
    <property type="nucleotide sequence ID" value="XM_658769.1"/>
</dbReference>
<dbReference type="SMR" id="Q5AZM3"/>
<dbReference type="FunCoup" id="Q5AZM3">
    <property type="interactions" value="724"/>
</dbReference>
<dbReference type="STRING" id="227321.Q5AZM3"/>
<dbReference type="EnsemblFungi" id="CBF69840">
    <property type="protein sequence ID" value="CBF69840"/>
    <property type="gene ID" value="ANIA_06257"/>
</dbReference>
<dbReference type="VEuPathDB" id="FungiDB:AN6257"/>
<dbReference type="eggNOG" id="KOG0307">
    <property type="taxonomic scope" value="Eukaryota"/>
</dbReference>
<dbReference type="HOGENOM" id="CLU_003033_2_0_1"/>
<dbReference type="InParanoid" id="Q5AZM3"/>
<dbReference type="OMA" id="WLERPCG"/>
<dbReference type="OrthoDB" id="542917at2759"/>
<dbReference type="Proteomes" id="UP000000560">
    <property type="component" value="Chromosome I"/>
</dbReference>
<dbReference type="GO" id="GO:0030127">
    <property type="term" value="C:COPII vesicle coat"/>
    <property type="evidence" value="ECO:0000318"/>
    <property type="project" value="GO_Central"/>
</dbReference>
<dbReference type="GO" id="GO:0070971">
    <property type="term" value="C:endoplasmic reticulum exit site"/>
    <property type="evidence" value="ECO:0000318"/>
    <property type="project" value="GO_Central"/>
</dbReference>
<dbReference type="GO" id="GO:0005789">
    <property type="term" value="C:endoplasmic reticulum membrane"/>
    <property type="evidence" value="ECO:0007669"/>
    <property type="project" value="UniProtKB-SubCell"/>
</dbReference>
<dbReference type="GO" id="GO:0005198">
    <property type="term" value="F:structural molecule activity"/>
    <property type="evidence" value="ECO:0000318"/>
    <property type="project" value="GO_Central"/>
</dbReference>
<dbReference type="GO" id="GO:0090110">
    <property type="term" value="P:COPII-coated vesicle cargo loading"/>
    <property type="evidence" value="ECO:0000318"/>
    <property type="project" value="GO_Central"/>
</dbReference>
<dbReference type="GO" id="GO:0007029">
    <property type="term" value="P:endoplasmic reticulum organization"/>
    <property type="evidence" value="ECO:0000318"/>
    <property type="project" value="GO_Central"/>
</dbReference>
<dbReference type="GO" id="GO:0015031">
    <property type="term" value="P:protein transport"/>
    <property type="evidence" value="ECO:0007669"/>
    <property type="project" value="UniProtKB-KW"/>
</dbReference>
<dbReference type="FunFam" id="1.20.940.10:FF:000007">
    <property type="entry name" value="Protein transport protein (SEC31), putative"/>
    <property type="match status" value="1"/>
</dbReference>
<dbReference type="FunFam" id="2.130.10.10:FF:000193">
    <property type="entry name" value="Protein transport protein SEC31, putative"/>
    <property type="match status" value="1"/>
</dbReference>
<dbReference type="Gene3D" id="1.25.40.1030">
    <property type="match status" value="1"/>
</dbReference>
<dbReference type="Gene3D" id="1.20.940.10">
    <property type="entry name" value="Functional domain of the splicing factor Prp18"/>
    <property type="match status" value="1"/>
</dbReference>
<dbReference type="Gene3D" id="2.130.10.10">
    <property type="entry name" value="YVTN repeat-like/Quinoprotein amine dehydrogenase"/>
    <property type="match status" value="1"/>
</dbReference>
<dbReference type="InterPro" id="IPR040251">
    <property type="entry name" value="SEC31-like"/>
</dbReference>
<dbReference type="InterPro" id="IPR009917">
    <property type="entry name" value="SRA1/Sec31"/>
</dbReference>
<dbReference type="InterPro" id="IPR015943">
    <property type="entry name" value="WD40/YVTN_repeat-like_dom_sf"/>
</dbReference>
<dbReference type="InterPro" id="IPR036322">
    <property type="entry name" value="WD40_repeat_dom_sf"/>
</dbReference>
<dbReference type="InterPro" id="IPR001680">
    <property type="entry name" value="WD40_rpt"/>
</dbReference>
<dbReference type="PANTHER" id="PTHR13923">
    <property type="entry name" value="SEC31-RELATED PROTEIN"/>
    <property type="match status" value="1"/>
</dbReference>
<dbReference type="PANTHER" id="PTHR13923:SF11">
    <property type="entry name" value="SECRETORY 31, ISOFORM D"/>
    <property type="match status" value="1"/>
</dbReference>
<dbReference type="Pfam" id="PF07304">
    <property type="entry name" value="SRA1"/>
    <property type="match status" value="1"/>
</dbReference>
<dbReference type="Pfam" id="PF00400">
    <property type="entry name" value="WD40"/>
    <property type="match status" value="1"/>
</dbReference>
<dbReference type="SMART" id="SM00320">
    <property type="entry name" value="WD40"/>
    <property type="match status" value="6"/>
</dbReference>
<dbReference type="SUPFAM" id="SSF50978">
    <property type="entry name" value="WD40 repeat-like"/>
    <property type="match status" value="1"/>
</dbReference>
<dbReference type="PROSITE" id="PS50082">
    <property type="entry name" value="WD_REPEATS_2"/>
    <property type="match status" value="2"/>
</dbReference>
<dbReference type="PROSITE" id="PS50294">
    <property type="entry name" value="WD_REPEATS_REGION"/>
    <property type="match status" value="1"/>
</dbReference>
<organism>
    <name type="scientific">Emericella nidulans (strain FGSC A4 / ATCC 38163 / CBS 112.46 / NRRL 194 / M139)</name>
    <name type="common">Aspergillus nidulans</name>
    <dbReference type="NCBI Taxonomy" id="227321"/>
    <lineage>
        <taxon>Eukaryota</taxon>
        <taxon>Fungi</taxon>
        <taxon>Dikarya</taxon>
        <taxon>Ascomycota</taxon>
        <taxon>Pezizomycotina</taxon>
        <taxon>Eurotiomycetes</taxon>
        <taxon>Eurotiomycetidae</taxon>
        <taxon>Eurotiales</taxon>
        <taxon>Aspergillaceae</taxon>
        <taxon>Aspergillus</taxon>
        <taxon>Aspergillus subgen. Nidulantes</taxon>
    </lineage>
</organism>
<evidence type="ECO:0000250" key="1"/>
<evidence type="ECO:0000255" key="2">
    <source>
        <dbReference type="PROSITE-ProRule" id="PRU00221"/>
    </source>
</evidence>
<evidence type="ECO:0000256" key="3">
    <source>
        <dbReference type="SAM" id="MobiDB-lite"/>
    </source>
</evidence>
<evidence type="ECO:0000305" key="4"/>
<gene>
    <name type="primary">sec31</name>
    <name type="ORF">AN6257</name>
</gene>
<sequence>MVRLREIPRTATFAWSPGAASPLIATGTRAGAVDADFSNETCLELWDLALGNEDAGAELQPVAKIDTDSGFNDLAWTDSEDNSRGIIAGGLESGSLGLWDADKLLSGASDAVLSKSSKHSGAIKALQFNPRHSSLLATGGAKGELYISDLNDLENPYRLGSSTARADDIECLDWNKKVAHILVTGSSAGFVTVWDVKTRKESLTLNNMGRKAVSAVAWDPTKPTKLVTATPHESDPIINLWDLRNSHAPERTLRGHEAGVLSLSWCNQDPDLLLSSGKDNRTICWNPQTGISYGEFPVVTNWTFQTRWNPRNPNFFATASFDGRISIQTIQNTSTETAKAVADQNQALDGEDFFAKAQSQPQVSSFSLPKAPKWLERPCSSTFGFGGRVVSVNLLEKGGRASKIKITPFEVDEAVGKSTETFESALKEGDLKSICENRITSAATEEEKSDWRVIDALLSDSPRKGLVEYLGFNDQAEDVSEGLAKLGLSKEDEVNGEAAPKESRRPGARKHKRLQSMFDASPDDNFLSDLAASKGAKTNNPFQIFNGEESEADKNITRALLLGDFEKALDHALKEDRMSDAFMIAIVGGQKCIEKAQEHYFSKQTESPNYVRLLASVVGKNLWDVVYNADLSNWKEIMVALCTFADEKDFADLCDALGDRLEEQIRNTGDKAIRKDASLCYLAGSKLEKVVSIWIEEQRENEQAAIETAAEDSSFSIHVRALQSLIEKVTIFRQVTKFEDSERTKDCDWKLSVLYDKYIEYADVVATHGRLQVAQKYLDLVPEKHPEAEIARNRIKLAMRQPTTRAQPATSTARVVSNKPLPQPAAYQPPTTFSAGARAATPTSYAPPAPAANPYAPPAAASNPYAPPVAASNPYAPTAAAANPYAPSAAAPSQSTNPYAPAGGSYAPAAGYQPRQQSFGAPPPSVGGVPPPPRASSQSPATVTTYTTAKNLPAWNDLPEGFAKQPVSRRGTPASSAPISSPFPNQSPAVSQGPPPAGAGPQRTPSVPPPPKGVPPPPRMTSPPSAGQAPPNPLSAVPPPPANPYAAVPQSPSVGSMAPPASIPRGSSPYNAPPTIPPPSNRYAPSPAAQAASPQLQARAPVPPPPQAAASPYAPPPPAQPLAANPYAPSTPPPMQPPLQQVPPPQSAGSRPSTASSVKKASPAPPKYPPGDRSHIPAEARPIFEILSEDMQRVKSRAPSSFKAQVDDAERRLNFLFDHLNNEDLLKPNTVQDMVQLARAIQARDYETARTIHIDIMTNRTDECGNWMVGVKRLISMSKVTP</sequence>
<comment type="function">
    <text evidence="1">Component of the coat protein complex II (COPII) which promotes the formation of transport vesicles from the endoplasmic reticulum (ER). The coat has two main functions, the physical deformation of the endoplasmic reticulum membrane into vesicles and the selection of cargo molecules (By similarity).</text>
</comment>
<comment type="subunit">
    <text evidence="1">The COPII coat is composed of at least 5 proteins: the sec23/24 complex, the sec13/31 complex, and the protein sar1. sec13 and sec31 make a 2:2 tetramer that forms the edge element of the COPII outer coat. The tetramer self-assembles in multiple copies to form the complete polyhedral cage. Interacts (via WD 8) with sec13 (By similarity).</text>
</comment>
<comment type="subcellular location">
    <subcellularLocation>
        <location evidence="1">Cytoplasmic vesicle</location>
        <location evidence="1">COPII-coated vesicle membrane</location>
        <topology evidence="1">Peripheral membrane protein</topology>
        <orientation evidence="1">Cytoplasmic side</orientation>
    </subcellularLocation>
    <subcellularLocation>
        <location evidence="1">Endoplasmic reticulum membrane</location>
        <topology evidence="1">Peripheral membrane protein</topology>
        <orientation evidence="1">Cytoplasmic side</orientation>
    </subcellularLocation>
</comment>
<comment type="similarity">
    <text evidence="4">Belongs to the WD repeat SEC31 family.</text>
</comment>
<comment type="sequence caution" evidence="4">
    <conflict type="erroneous gene model prediction">
        <sequence resource="EMBL-CDS" id="EAA58641"/>
    </conflict>
</comment>
<reference key="1">
    <citation type="journal article" date="2005" name="Nature">
        <title>Sequencing of Aspergillus nidulans and comparative analysis with A. fumigatus and A. oryzae.</title>
        <authorList>
            <person name="Galagan J.E."/>
            <person name="Calvo S.E."/>
            <person name="Cuomo C."/>
            <person name="Ma L.-J."/>
            <person name="Wortman J.R."/>
            <person name="Batzoglou S."/>
            <person name="Lee S.-I."/>
            <person name="Bastuerkmen M."/>
            <person name="Spevak C.C."/>
            <person name="Clutterbuck J."/>
            <person name="Kapitonov V."/>
            <person name="Jurka J."/>
            <person name="Scazzocchio C."/>
            <person name="Farman M.L."/>
            <person name="Butler J."/>
            <person name="Purcell S."/>
            <person name="Harris S."/>
            <person name="Braus G.H."/>
            <person name="Draht O."/>
            <person name="Busch S."/>
            <person name="D'Enfert C."/>
            <person name="Bouchier C."/>
            <person name="Goldman G.H."/>
            <person name="Bell-Pedersen D."/>
            <person name="Griffiths-Jones S."/>
            <person name="Doonan J.H."/>
            <person name="Yu J."/>
            <person name="Vienken K."/>
            <person name="Pain A."/>
            <person name="Freitag M."/>
            <person name="Selker E.U."/>
            <person name="Archer D.B."/>
            <person name="Penalva M.A."/>
            <person name="Oakley B.R."/>
            <person name="Momany M."/>
            <person name="Tanaka T."/>
            <person name="Kumagai T."/>
            <person name="Asai K."/>
            <person name="Machida M."/>
            <person name="Nierman W.C."/>
            <person name="Denning D.W."/>
            <person name="Caddick M.X."/>
            <person name="Hynes M."/>
            <person name="Paoletti M."/>
            <person name="Fischer R."/>
            <person name="Miller B.L."/>
            <person name="Dyer P.S."/>
            <person name="Sachs M.S."/>
            <person name="Osmani S.A."/>
            <person name="Birren B.W."/>
        </authorList>
    </citation>
    <scope>NUCLEOTIDE SEQUENCE [LARGE SCALE GENOMIC DNA]</scope>
    <source>
        <strain>FGSC A4 / ATCC 38163 / CBS 112.46 / NRRL 194 / M139</strain>
    </source>
</reference>
<reference key="2">
    <citation type="journal article" date="2009" name="Fungal Genet. Biol.">
        <title>The 2008 update of the Aspergillus nidulans genome annotation: a community effort.</title>
        <authorList>
            <person name="Wortman J.R."/>
            <person name="Gilsenan J.M."/>
            <person name="Joardar V."/>
            <person name="Deegan J."/>
            <person name="Clutterbuck J."/>
            <person name="Andersen M.R."/>
            <person name="Archer D."/>
            <person name="Bencina M."/>
            <person name="Braus G."/>
            <person name="Coutinho P."/>
            <person name="von Dohren H."/>
            <person name="Doonan J."/>
            <person name="Driessen A.J."/>
            <person name="Durek P."/>
            <person name="Espeso E."/>
            <person name="Fekete E."/>
            <person name="Flipphi M."/>
            <person name="Estrada C.G."/>
            <person name="Geysens S."/>
            <person name="Goldman G."/>
            <person name="de Groot P.W."/>
            <person name="Hansen K."/>
            <person name="Harris S.D."/>
            <person name="Heinekamp T."/>
            <person name="Helmstaedt K."/>
            <person name="Henrissat B."/>
            <person name="Hofmann G."/>
            <person name="Homan T."/>
            <person name="Horio T."/>
            <person name="Horiuchi H."/>
            <person name="James S."/>
            <person name="Jones M."/>
            <person name="Karaffa L."/>
            <person name="Karanyi Z."/>
            <person name="Kato M."/>
            <person name="Keller N."/>
            <person name="Kelly D.E."/>
            <person name="Kiel J.A."/>
            <person name="Kim J.M."/>
            <person name="van der Klei I.J."/>
            <person name="Klis F.M."/>
            <person name="Kovalchuk A."/>
            <person name="Krasevec N."/>
            <person name="Kubicek C.P."/>
            <person name="Liu B."/>
            <person name="Maccabe A."/>
            <person name="Meyer V."/>
            <person name="Mirabito P."/>
            <person name="Miskei M."/>
            <person name="Mos M."/>
            <person name="Mullins J."/>
            <person name="Nelson D.R."/>
            <person name="Nielsen J."/>
            <person name="Oakley B.R."/>
            <person name="Osmani S.A."/>
            <person name="Pakula T."/>
            <person name="Paszewski A."/>
            <person name="Paulsen I."/>
            <person name="Pilsyk S."/>
            <person name="Pocsi I."/>
            <person name="Punt P.J."/>
            <person name="Ram A.F."/>
            <person name="Ren Q."/>
            <person name="Robellet X."/>
            <person name="Robson G."/>
            <person name="Seiboth B."/>
            <person name="van Solingen P."/>
            <person name="Specht T."/>
            <person name="Sun J."/>
            <person name="Taheri-Talesh N."/>
            <person name="Takeshita N."/>
            <person name="Ussery D."/>
            <person name="vanKuyk P.A."/>
            <person name="Visser H."/>
            <person name="van de Vondervoort P.J."/>
            <person name="de Vries R.P."/>
            <person name="Walton J."/>
            <person name="Xiang X."/>
            <person name="Xiong Y."/>
            <person name="Zeng A.P."/>
            <person name="Brandt B.W."/>
            <person name="Cornell M.J."/>
            <person name="van den Hondel C.A."/>
            <person name="Visser J."/>
            <person name="Oliver S.G."/>
            <person name="Turner G."/>
        </authorList>
    </citation>
    <scope>GENOME REANNOTATION</scope>
    <source>
        <strain>FGSC A4 / ATCC 38163 / CBS 112.46 / NRRL 194 / M139</strain>
    </source>
</reference>
<protein>
    <recommendedName>
        <fullName>Protein transport protein sec31</fullName>
    </recommendedName>
</protein>